<protein>
    <recommendedName>
        <fullName>Histone H2B.1</fullName>
    </recommendedName>
</protein>
<reference key="1">
    <citation type="journal article" date="2005" name="Genome Res.">
        <title>Sequence, annotation, and analysis of synteny between rice chromosome 3 and diverged grass species.</title>
        <authorList>
            <consortium name="The rice chromosome 3 sequencing consortium"/>
            <person name="Buell C.R."/>
            <person name="Yuan Q."/>
            <person name="Ouyang S."/>
            <person name="Liu J."/>
            <person name="Zhu W."/>
            <person name="Wang A."/>
            <person name="Maiti R."/>
            <person name="Haas B."/>
            <person name="Wortman J."/>
            <person name="Pertea M."/>
            <person name="Jones K.M."/>
            <person name="Kim M."/>
            <person name="Overton L."/>
            <person name="Tsitrin T."/>
            <person name="Fadrosh D."/>
            <person name="Bera J."/>
            <person name="Weaver B."/>
            <person name="Jin S."/>
            <person name="Johri S."/>
            <person name="Reardon M."/>
            <person name="Webb K."/>
            <person name="Hill J."/>
            <person name="Moffat K."/>
            <person name="Tallon L."/>
            <person name="Van Aken S."/>
            <person name="Lewis M."/>
            <person name="Utterback T."/>
            <person name="Feldblyum T."/>
            <person name="Zismann V."/>
            <person name="Iobst S."/>
            <person name="Hsiao J."/>
            <person name="de Vazeille A.R."/>
            <person name="Salzberg S.L."/>
            <person name="White O."/>
            <person name="Fraser C.M."/>
            <person name="Yu Y."/>
            <person name="Kim H."/>
            <person name="Rambo T."/>
            <person name="Currie J."/>
            <person name="Collura K."/>
            <person name="Kernodle-Thompson S."/>
            <person name="Wei F."/>
            <person name="Kudrna K."/>
            <person name="Ammiraju J.S.S."/>
            <person name="Luo M."/>
            <person name="Goicoechea J.L."/>
            <person name="Wing R.A."/>
            <person name="Henry D."/>
            <person name="Oates R."/>
            <person name="Palmer M."/>
            <person name="Pries G."/>
            <person name="Saski C."/>
            <person name="Simmons J."/>
            <person name="Soderlund C."/>
            <person name="Nelson W."/>
            <person name="de la Bastide M."/>
            <person name="Spiegel L."/>
            <person name="Nascimento L."/>
            <person name="Huang E."/>
            <person name="Preston R."/>
            <person name="Zutavern T."/>
            <person name="Palmer L."/>
            <person name="O'Shaughnessy A."/>
            <person name="Dike S."/>
            <person name="McCombie W.R."/>
            <person name="Minx P."/>
            <person name="Cordum H."/>
            <person name="Wilson R."/>
            <person name="Jin W."/>
            <person name="Lee H.R."/>
            <person name="Jiang J."/>
            <person name="Jackson S."/>
        </authorList>
    </citation>
    <scope>NUCLEOTIDE SEQUENCE [LARGE SCALE GENOMIC DNA]</scope>
    <source>
        <strain>cv. Nipponbare</strain>
    </source>
</reference>
<reference key="2">
    <citation type="journal article" date="2005" name="Nature">
        <title>The map-based sequence of the rice genome.</title>
        <authorList>
            <consortium name="International rice genome sequencing project (IRGSP)"/>
        </authorList>
    </citation>
    <scope>NUCLEOTIDE SEQUENCE [LARGE SCALE GENOMIC DNA]</scope>
    <source>
        <strain>cv. Nipponbare</strain>
    </source>
</reference>
<reference key="3">
    <citation type="journal article" date="2008" name="Nucleic Acids Res.">
        <title>The rice annotation project database (RAP-DB): 2008 update.</title>
        <authorList>
            <consortium name="The rice annotation project (RAP)"/>
        </authorList>
    </citation>
    <scope>GENOME REANNOTATION</scope>
    <source>
        <strain>cv. Nipponbare</strain>
    </source>
</reference>
<reference key="4">
    <citation type="journal article" date="2013" name="Rice">
        <title>Improvement of the Oryza sativa Nipponbare reference genome using next generation sequence and optical map data.</title>
        <authorList>
            <person name="Kawahara Y."/>
            <person name="de la Bastide M."/>
            <person name="Hamilton J.P."/>
            <person name="Kanamori H."/>
            <person name="McCombie W.R."/>
            <person name="Ouyang S."/>
            <person name="Schwartz D.C."/>
            <person name="Tanaka T."/>
            <person name="Wu J."/>
            <person name="Zhou S."/>
            <person name="Childs K.L."/>
            <person name="Davidson R.M."/>
            <person name="Lin H."/>
            <person name="Quesada-Ocampo L."/>
            <person name="Vaillancourt B."/>
            <person name="Sakai H."/>
            <person name="Lee S.S."/>
            <person name="Kim J."/>
            <person name="Numa H."/>
            <person name="Itoh T."/>
            <person name="Buell C.R."/>
            <person name="Matsumoto T."/>
        </authorList>
    </citation>
    <scope>GENOME REANNOTATION</scope>
    <source>
        <strain>cv. Nipponbare</strain>
    </source>
</reference>
<reference key="5">
    <citation type="journal article" date="2005" name="PLoS Biol.">
        <title>The genomes of Oryza sativa: a history of duplications.</title>
        <authorList>
            <person name="Yu J."/>
            <person name="Wang J."/>
            <person name="Lin W."/>
            <person name="Li S."/>
            <person name="Li H."/>
            <person name="Zhou J."/>
            <person name="Ni P."/>
            <person name="Dong W."/>
            <person name="Hu S."/>
            <person name="Zeng C."/>
            <person name="Zhang J."/>
            <person name="Zhang Y."/>
            <person name="Li R."/>
            <person name="Xu Z."/>
            <person name="Li S."/>
            <person name="Li X."/>
            <person name="Zheng H."/>
            <person name="Cong L."/>
            <person name="Lin L."/>
            <person name="Yin J."/>
            <person name="Geng J."/>
            <person name="Li G."/>
            <person name="Shi J."/>
            <person name="Liu J."/>
            <person name="Lv H."/>
            <person name="Li J."/>
            <person name="Wang J."/>
            <person name="Deng Y."/>
            <person name="Ran L."/>
            <person name="Shi X."/>
            <person name="Wang X."/>
            <person name="Wu Q."/>
            <person name="Li C."/>
            <person name="Ren X."/>
            <person name="Wang J."/>
            <person name="Wang X."/>
            <person name="Li D."/>
            <person name="Liu D."/>
            <person name="Zhang X."/>
            <person name="Ji Z."/>
            <person name="Zhao W."/>
            <person name="Sun Y."/>
            <person name="Zhang Z."/>
            <person name="Bao J."/>
            <person name="Han Y."/>
            <person name="Dong L."/>
            <person name="Ji J."/>
            <person name="Chen P."/>
            <person name="Wu S."/>
            <person name="Liu J."/>
            <person name="Xiao Y."/>
            <person name="Bu D."/>
            <person name="Tan J."/>
            <person name="Yang L."/>
            <person name="Ye C."/>
            <person name="Zhang J."/>
            <person name="Xu J."/>
            <person name="Zhou Y."/>
            <person name="Yu Y."/>
            <person name="Zhang B."/>
            <person name="Zhuang S."/>
            <person name="Wei H."/>
            <person name="Liu B."/>
            <person name="Lei M."/>
            <person name="Yu H."/>
            <person name="Li Y."/>
            <person name="Xu H."/>
            <person name="Wei S."/>
            <person name="He X."/>
            <person name="Fang L."/>
            <person name="Zhang Z."/>
            <person name="Zhang Y."/>
            <person name="Huang X."/>
            <person name="Su Z."/>
            <person name="Tong W."/>
            <person name="Li J."/>
            <person name="Tong Z."/>
            <person name="Li S."/>
            <person name="Ye J."/>
            <person name="Wang L."/>
            <person name="Fang L."/>
            <person name="Lei T."/>
            <person name="Chen C.-S."/>
            <person name="Chen H.-C."/>
            <person name="Xu Z."/>
            <person name="Li H."/>
            <person name="Huang H."/>
            <person name="Zhang F."/>
            <person name="Xu H."/>
            <person name="Li N."/>
            <person name="Zhao C."/>
            <person name="Li S."/>
            <person name="Dong L."/>
            <person name="Huang Y."/>
            <person name="Li L."/>
            <person name="Xi Y."/>
            <person name="Qi Q."/>
            <person name="Li W."/>
            <person name="Zhang B."/>
            <person name="Hu W."/>
            <person name="Zhang Y."/>
            <person name="Tian X."/>
            <person name="Jiao Y."/>
            <person name="Liang X."/>
            <person name="Jin J."/>
            <person name="Gao L."/>
            <person name="Zheng W."/>
            <person name="Hao B."/>
            <person name="Liu S.-M."/>
            <person name="Wang W."/>
            <person name="Yuan L."/>
            <person name="Cao M."/>
            <person name="McDermott J."/>
            <person name="Samudrala R."/>
            <person name="Wang J."/>
            <person name="Wong G.K.-S."/>
            <person name="Yang H."/>
        </authorList>
    </citation>
    <scope>NUCLEOTIDE SEQUENCE [LARGE SCALE GENOMIC DNA]</scope>
    <source>
        <strain>cv. Nipponbare</strain>
    </source>
</reference>
<keyword id="KW-0007">Acetylation</keyword>
<keyword id="KW-0158">Chromosome</keyword>
<keyword id="KW-0238">DNA-binding</keyword>
<keyword id="KW-1017">Isopeptide bond</keyword>
<keyword id="KW-0544">Nucleosome core</keyword>
<keyword id="KW-0539">Nucleus</keyword>
<keyword id="KW-1185">Reference proteome</keyword>
<keyword id="KW-0832">Ubl conjugation</keyword>
<dbReference type="EMBL" id="DP000009">
    <property type="protein sequence ID" value="ABF95290.1"/>
    <property type="status" value="ALT_SEQ"/>
    <property type="molecule type" value="Genomic_DNA"/>
</dbReference>
<dbReference type="EMBL" id="AP008209">
    <property type="status" value="NOT_ANNOTATED_CDS"/>
    <property type="molecule type" value="Genomic_DNA"/>
</dbReference>
<dbReference type="EMBL" id="AP014959">
    <property type="protein sequence ID" value="BAS83551.1"/>
    <property type="molecule type" value="Genomic_DNA"/>
</dbReference>
<dbReference type="EMBL" id="CM000140">
    <property type="protein sequence ID" value="EAZ26463.1"/>
    <property type="molecule type" value="Genomic_DNA"/>
</dbReference>
<dbReference type="RefSeq" id="XP_015630475.1">
    <property type="nucleotide sequence ID" value="XM_015774989.1"/>
</dbReference>
<dbReference type="SMR" id="A3AGM4"/>
<dbReference type="FunCoup" id="A3AGM4">
    <property type="interactions" value="1484"/>
</dbReference>
<dbReference type="STRING" id="39947.A3AGM4"/>
<dbReference type="PaxDb" id="39947-A3AGM4"/>
<dbReference type="EnsemblPlants" id="Os03t0279000-00">
    <property type="protein sequence ID" value="Os03t0279000-00"/>
    <property type="gene ID" value="Os03g0279000"/>
</dbReference>
<dbReference type="Gramene" id="Os03t0279000-00">
    <property type="protein sequence ID" value="Os03t0279000-00"/>
    <property type="gene ID" value="Os03g0279000"/>
</dbReference>
<dbReference type="eggNOG" id="KOG1744">
    <property type="taxonomic scope" value="Eukaryota"/>
</dbReference>
<dbReference type="HOGENOM" id="CLU_075666_1_0_1"/>
<dbReference type="InParanoid" id="A3AGM4"/>
<dbReference type="OMA" id="AQLCQTT"/>
<dbReference type="Proteomes" id="UP000000763">
    <property type="component" value="Chromosome 3"/>
</dbReference>
<dbReference type="Proteomes" id="UP000007752">
    <property type="component" value="Chromosome 3"/>
</dbReference>
<dbReference type="Proteomes" id="UP000059680">
    <property type="component" value="Chromosome 3"/>
</dbReference>
<dbReference type="GO" id="GO:0000786">
    <property type="term" value="C:nucleosome"/>
    <property type="evidence" value="ECO:0007669"/>
    <property type="project" value="UniProtKB-KW"/>
</dbReference>
<dbReference type="GO" id="GO:0005634">
    <property type="term" value="C:nucleus"/>
    <property type="evidence" value="ECO:0007669"/>
    <property type="project" value="UniProtKB-SubCell"/>
</dbReference>
<dbReference type="GO" id="GO:0003677">
    <property type="term" value="F:DNA binding"/>
    <property type="evidence" value="ECO:0000318"/>
    <property type="project" value="GO_Central"/>
</dbReference>
<dbReference type="GO" id="GO:0046982">
    <property type="term" value="F:protein heterodimerization activity"/>
    <property type="evidence" value="ECO:0007669"/>
    <property type="project" value="InterPro"/>
</dbReference>
<dbReference type="GO" id="GO:0030527">
    <property type="term" value="F:structural constituent of chromatin"/>
    <property type="evidence" value="ECO:0007669"/>
    <property type="project" value="InterPro"/>
</dbReference>
<dbReference type="CDD" id="cd22910">
    <property type="entry name" value="HFD_H2B"/>
    <property type="match status" value="1"/>
</dbReference>
<dbReference type="FunFam" id="1.10.20.10:FF:000014">
    <property type="entry name" value="Histone H2B"/>
    <property type="match status" value="1"/>
</dbReference>
<dbReference type="Gene3D" id="1.10.20.10">
    <property type="entry name" value="Histone, subunit A"/>
    <property type="match status" value="1"/>
</dbReference>
<dbReference type="InterPro" id="IPR009072">
    <property type="entry name" value="Histone-fold"/>
</dbReference>
<dbReference type="InterPro" id="IPR007125">
    <property type="entry name" value="Histone_H2A/H2B/H3"/>
</dbReference>
<dbReference type="InterPro" id="IPR000558">
    <property type="entry name" value="Histone_H2B"/>
</dbReference>
<dbReference type="InterPro" id="IPR055333">
    <property type="entry name" value="HISTONE_H2B_site"/>
</dbReference>
<dbReference type="PANTHER" id="PTHR23428">
    <property type="entry name" value="HISTONE H2B"/>
    <property type="match status" value="1"/>
</dbReference>
<dbReference type="Pfam" id="PF00125">
    <property type="entry name" value="Histone"/>
    <property type="match status" value="1"/>
</dbReference>
<dbReference type="PRINTS" id="PR00621">
    <property type="entry name" value="HISTONEH2B"/>
</dbReference>
<dbReference type="SMART" id="SM00427">
    <property type="entry name" value="H2B"/>
    <property type="match status" value="1"/>
</dbReference>
<dbReference type="SUPFAM" id="SSF47113">
    <property type="entry name" value="Histone-fold"/>
    <property type="match status" value="1"/>
</dbReference>
<dbReference type="PROSITE" id="PS00357">
    <property type="entry name" value="HISTONE_H2B"/>
    <property type="match status" value="1"/>
</dbReference>
<evidence type="ECO:0000250" key="1"/>
<evidence type="ECO:0000256" key="2">
    <source>
        <dbReference type="SAM" id="MobiDB-lite"/>
    </source>
</evidence>
<evidence type="ECO:0000305" key="3"/>
<organism>
    <name type="scientific">Oryza sativa subsp. japonica</name>
    <name type="common">Rice</name>
    <dbReference type="NCBI Taxonomy" id="39947"/>
    <lineage>
        <taxon>Eukaryota</taxon>
        <taxon>Viridiplantae</taxon>
        <taxon>Streptophyta</taxon>
        <taxon>Embryophyta</taxon>
        <taxon>Tracheophyta</taxon>
        <taxon>Spermatophyta</taxon>
        <taxon>Magnoliopsida</taxon>
        <taxon>Liliopsida</taxon>
        <taxon>Poales</taxon>
        <taxon>Poaceae</taxon>
        <taxon>BOP clade</taxon>
        <taxon>Oryzoideae</taxon>
        <taxon>Oryzeae</taxon>
        <taxon>Oryzinae</taxon>
        <taxon>Oryza</taxon>
        <taxon>Oryza sativa</taxon>
    </lineage>
</organism>
<proteinExistence type="evidence at protein level"/>
<sequence>MAPKAEKKPAEKKPAAGEEKSAEKAPAGKKPKAEKRLPASKASSKEGGAGDKKGRKKAKKSVETYKIYIFKVLKQVHPDIGISSKAMSIMNSFINDIFEKLAQEAARLARYNKKPTITSREIQTSVRLVLPGELAKHAVSEGTKAVTKFTSN</sequence>
<feature type="initiator methionine" description="Removed" evidence="1">
    <location>
        <position position="1"/>
    </location>
</feature>
<feature type="chain" id="PRO_0000294177" description="Histone H2B.1">
    <location>
        <begin position="2"/>
        <end position="152"/>
    </location>
</feature>
<feature type="region of interest" description="Disordered" evidence="2">
    <location>
        <begin position="1"/>
        <end position="60"/>
    </location>
</feature>
<feature type="compositionally biased region" description="Basic and acidic residues" evidence="2">
    <location>
        <begin position="1"/>
        <end position="23"/>
    </location>
</feature>
<feature type="modified residue" description="N6-acetyllysine" evidence="1">
    <location>
        <position position="7"/>
    </location>
</feature>
<feature type="modified residue" description="N6-acetyllysine" evidence="1">
    <location>
        <position position="35"/>
    </location>
</feature>
<feature type="cross-link" description="Glycyl lysine isopeptide (Lys-Gly) (interchain with G-Cter in ubiquitin)">
    <location>
        <position position="148"/>
    </location>
</feature>
<accession>A3AGM4</accession>
<accession>A0A0P0VW51</accession>
<accession>Q10N82</accession>
<comment type="function">
    <text>Core component of nucleosome. Nucleosomes wrap and compact DNA into chromatin, limiting DNA accessibility to the cellular machineries which require DNA as a template. Histones thereby play a central role in transcription regulation, DNA repair, DNA replication and chromosomal stability. DNA accessibility is regulated via a complex set of post-translational modifications of histones, also called histone code, and nucleosome remodeling.</text>
</comment>
<comment type="subunit">
    <text>The nucleosome is a histone octamer containing two molecules each of H2A, H2B, H3 and H4 assembled in one H3-H4 heterotetramer and two H2A-H2B heterodimers. The octamer wraps approximately 147 bp of DNA.</text>
</comment>
<comment type="subcellular location">
    <subcellularLocation>
        <location evidence="1">Nucleus</location>
    </subcellularLocation>
    <subcellularLocation>
        <location evidence="1">Chromosome</location>
    </subcellularLocation>
</comment>
<comment type="PTM">
    <text evidence="1">Can be acetylated to form H2BK6ac and H2BK33ac.</text>
</comment>
<comment type="PTM">
    <text evidence="1">Monoubiquitinated by BRE1 to form H2BK143ub1 and deubiquitinated by UBP26. Required for heterochromatic histone H3 di- and trimethylation at H3K4me. May give a specific tag for epigenetic transcriptional activation (By similarity).</text>
</comment>
<comment type="similarity">
    <text evidence="3">Belongs to the histone H2B family.</text>
</comment>
<comment type="caution">
    <text evidence="3">To ensure consistency between histone entries, we follow the 'Brno' nomenclature for histone modifications, with positions referring to those used in the literature for the 'closest' model organism. Due to slight variations in histone sequences between organisms and to the presence of initiator methionine in UniProtKB/Swiss-Prot sequences, the actual positions of modified amino acids in the sequence generally differ. In this entry the following conventions are used: H2BK6ac = acetylated Lys-7; H2BK33ac = acetylated Lys-35; H2BK143ub1 = monoubiquitinated Lys-148.</text>
</comment>
<comment type="sequence caution" evidence="3">
    <conflict type="erroneous gene model prediction">
        <sequence resource="EMBL-CDS" id="ABF95290"/>
    </conflict>
</comment>
<name>H2B1_ORYSJ</name>
<gene>
    <name type="primary">H2B1</name>
    <name type="ordered locus">Os03g0279000</name>
    <name type="ordered locus">LOC_Os03g17084</name>
    <name type="ORF">OsJ_009946</name>
</gene>